<comment type="catalytic activity">
    <reaction>
        <text>a ubiquinone + NADH + 5 H(+)(in) = a ubiquinol + NAD(+) + 4 H(+)(out)</text>
        <dbReference type="Rhea" id="RHEA:29091"/>
        <dbReference type="Rhea" id="RHEA-COMP:9565"/>
        <dbReference type="Rhea" id="RHEA-COMP:9566"/>
        <dbReference type="ChEBI" id="CHEBI:15378"/>
        <dbReference type="ChEBI" id="CHEBI:16389"/>
        <dbReference type="ChEBI" id="CHEBI:17976"/>
        <dbReference type="ChEBI" id="CHEBI:57540"/>
        <dbReference type="ChEBI" id="CHEBI:57945"/>
        <dbReference type="EC" id="7.1.1.2"/>
    </reaction>
</comment>
<comment type="subcellular location">
    <subcellularLocation>
        <location evidence="2">Cell membrane</location>
        <topology evidence="2">Multi-pass membrane protein</topology>
    </subcellularLocation>
</comment>
<comment type="similarity">
    <text evidence="2">Belongs to the complex I subunit 1 family.</text>
</comment>
<sequence length="295" mass="31909">MMLMDTSLIGAINLTIHAFLVGSLLLGLHRKIMARIQGRPGPPIIQYLLHTLKFYVKEITFPITAGNPLYIFVALLDIAIWLAALIIAIDFKSSLLIIIGIYVLQKIVEHGCGLSSGSPYGKIGGVRSVFSAAAEVPLFAVVAAIYLTTHSVLISDILSYQEIHGSLLFKMPICAFAFFILLVSKAPNSPFGIVKGKDIVSGYMTEHYGLLGAIIYIAEAIAYFVLLWLFIAVFIGPLVINSPVLTLAVMVVMTVILAFVNGLTPLLAPHHSVMLQMTIAGLVLCDVLYRLIVGG</sequence>
<organism>
    <name type="scientific">Methanocaldococcus jannaschii (strain ATCC 43067 / DSM 2661 / JAL-1 / JCM 10045 / NBRC 100440)</name>
    <name type="common">Methanococcus jannaschii</name>
    <dbReference type="NCBI Taxonomy" id="243232"/>
    <lineage>
        <taxon>Archaea</taxon>
        <taxon>Methanobacteriati</taxon>
        <taxon>Methanobacteriota</taxon>
        <taxon>Methanomada group</taxon>
        <taxon>Methanococci</taxon>
        <taxon>Methanococcales</taxon>
        <taxon>Methanocaldococcaceae</taxon>
        <taxon>Methanocaldococcus</taxon>
    </lineage>
</organism>
<reference key="1">
    <citation type="journal article" date="1996" name="Science">
        <title>Complete genome sequence of the methanogenic archaeon, Methanococcus jannaschii.</title>
        <authorList>
            <person name="Bult C.J."/>
            <person name="White O."/>
            <person name="Olsen G.J."/>
            <person name="Zhou L."/>
            <person name="Fleischmann R.D."/>
            <person name="Sutton G.G."/>
            <person name="Blake J.A."/>
            <person name="FitzGerald L.M."/>
            <person name="Clayton R.A."/>
            <person name="Gocayne J.D."/>
            <person name="Kerlavage A.R."/>
            <person name="Dougherty B.A."/>
            <person name="Tomb J.-F."/>
            <person name="Adams M.D."/>
            <person name="Reich C.I."/>
            <person name="Overbeek R."/>
            <person name="Kirkness E.F."/>
            <person name="Weinstock K.G."/>
            <person name="Merrick J.M."/>
            <person name="Glodek A."/>
            <person name="Scott J.L."/>
            <person name="Geoghagen N.S.M."/>
            <person name="Weidman J.F."/>
            <person name="Fuhrmann J.L."/>
            <person name="Nguyen D."/>
            <person name="Utterback T.R."/>
            <person name="Kelley J.M."/>
            <person name="Peterson J.D."/>
            <person name="Sadow P.W."/>
            <person name="Hanna M.C."/>
            <person name="Cotton M.D."/>
            <person name="Roberts K.M."/>
            <person name="Hurst M.A."/>
            <person name="Kaine B.P."/>
            <person name="Borodovsky M."/>
            <person name="Klenk H.-P."/>
            <person name="Fraser C.M."/>
            <person name="Smith H.O."/>
            <person name="Woese C.R."/>
            <person name="Venter J.C."/>
        </authorList>
    </citation>
    <scope>NUCLEOTIDE SEQUENCE [LARGE SCALE GENOMIC DNA]</scope>
    <source>
        <strain>ATCC 43067 / DSM 2661 / JAL-1 / JCM 10045 / NBRC 100440</strain>
    </source>
</reference>
<protein>
    <recommendedName>
        <fullName>Putative NADH-ubiquinone oxidoreductase MJ0520</fullName>
        <ecNumber>7.1.1.2</ecNumber>
    </recommendedName>
</protein>
<evidence type="ECO:0000255" key="1"/>
<evidence type="ECO:0000305" key="2"/>
<accession>Q57940</accession>
<feature type="chain" id="PRO_0000117536" description="Putative NADH-ubiquinone oxidoreductase MJ0520">
    <location>
        <begin position="1"/>
        <end position="295"/>
    </location>
</feature>
<feature type="transmembrane region" description="Helical" evidence="1">
    <location>
        <begin position="8"/>
        <end position="28"/>
    </location>
</feature>
<feature type="transmembrane region" description="Helical" evidence="1">
    <location>
        <begin position="69"/>
        <end position="89"/>
    </location>
</feature>
<feature type="transmembrane region" description="Helical" evidence="1">
    <location>
        <begin position="129"/>
        <end position="149"/>
    </location>
</feature>
<feature type="transmembrane region" description="Helical" evidence="1">
    <location>
        <begin position="163"/>
        <end position="183"/>
    </location>
</feature>
<feature type="transmembrane region" description="Helical" evidence="1">
    <location>
        <begin position="199"/>
        <end position="219"/>
    </location>
</feature>
<feature type="transmembrane region" description="Helical" evidence="1">
    <location>
        <begin position="220"/>
        <end position="240"/>
    </location>
</feature>
<feature type="transmembrane region" description="Helical" evidence="1">
    <location>
        <begin position="243"/>
        <end position="263"/>
    </location>
</feature>
<feature type="transmembrane region" description="Helical" evidence="1">
    <location>
        <begin position="273"/>
        <end position="293"/>
    </location>
</feature>
<name>Y520_METJA</name>
<keyword id="KW-1003">Cell membrane</keyword>
<keyword id="KW-0472">Membrane</keyword>
<keyword id="KW-0520">NAD</keyword>
<keyword id="KW-1185">Reference proteome</keyword>
<keyword id="KW-1278">Translocase</keyword>
<keyword id="KW-0812">Transmembrane</keyword>
<keyword id="KW-1133">Transmembrane helix</keyword>
<keyword id="KW-0830">Ubiquinone</keyword>
<gene>
    <name type="ordered locus">MJ0520</name>
</gene>
<dbReference type="EC" id="7.1.1.2"/>
<dbReference type="EMBL" id="L77117">
    <property type="protein sequence ID" value="AAB98508.1"/>
    <property type="molecule type" value="Genomic_DNA"/>
</dbReference>
<dbReference type="PIR" id="H64364">
    <property type="entry name" value="H64364"/>
</dbReference>
<dbReference type="SMR" id="Q57940"/>
<dbReference type="FunCoup" id="Q57940">
    <property type="interactions" value="7"/>
</dbReference>
<dbReference type="STRING" id="243232.MJ_0520"/>
<dbReference type="PaxDb" id="243232-MJ_0520"/>
<dbReference type="EnsemblBacteria" id="AAB98508">
    <property type="protein sequence ID" value="AAB98508"/>
    <property type="gene ID" value="MJ_0520"/>
</dbReference>
<dbReference type="KEGG" id="mja:MJ_0520"/>
<dbReference type="eggNOG" id="arCOG01545">
    <property type="taxonomic scope" value="Archaea"/>
</dbReference>
<dbReference type="HOGENOM" id="CLU_015134_0_2_2"/>
<dbReference type="InParanoid" id="Q57940"/>
<dbReference type="PhylomeDB" id="Q57940"/>
<dbReference type="Proteomes" id="UP000000805">
    <property type="component" value="Chromosome"/>
</dbReference>
<dbReference type="GO" id="GO:0009326">
    <property type="term" value="C:formate dehydrogenase complex"/>
    <property type="evidence" value="ECO:0000318"/>
    <property type="project" value="GO_Central"/>
</dbReference>
<dbReference type="GO" id="GO:0005886">
    <property type="term" value="C:plasma membrane"/>
    <property type="evidence" value="ECO:0000318"/>
    <property type="project" value="GO_Central"/>
</dbReference>
<dbReference type="GO" id="GO:0008137">
    <property type="term" value="F:NADH dehydrogenase (ubiquinone) activity"/>
    <property type="evidence" value="ECO:0007669"/>
    <property type="project" value="UniProtKB-EC"/>
</dbReference>
<dbReference type="GO" id="GO:0019645">
    <property type="term" value="P:anaerobic electron transport chain"/>
    <property type="evidence" value="ECO:0000318"/>
    <property type="project" value="GO_Central"/>
</dbReference>
<dbReference type="InterPro" id="IPR052561">
    <property type="entry name" value="ComplexI_Subunit1"/>
</dbReference>
<dbReference type="InterPro" id="IPR001694">
    <property type="entry name" value="NADH_UbQ_OxRdtase_su1/FPO"/>
</dbReference>
<dbReference type="PANTHER" id="PTHR43359">
    <property type="entry name" value="FORMATE HYDROGENLYASE SUBUNIT 4"/>
    <property type="match status" value="1"/>
</dbReference>
<dbReference type="PANTHER" id="PTHR43359:SF1">
    <property type="entry name" value="FORMATE HYDROGENLYASE SUBUNIT 4-RELATED"/>
    <property type="match status" value="1"/>
</dbReference>
<dbReference type="Pfam" id="PF00146">
    <property type="entry name" value="NADHdh"/>
    <property type="match status" value="1"/>
</dbReference>
<proteinExistence type="inferred from homology"/>